<protein>
    <recommendedName>
        <fullName evidence="1">Sulfite reductase [NADPH] hemoprotein beta-component</fullName>
        <shortName evidence="1">SiR-HP</shortName>
        <shortName evidence="1">SiRHP</shortName>
        <ecNumber evidence="1">1.8.1.2</ecNumber>
    </recommendedName>
</protein>
<gene>
    <name evidence="1" type="primary">cysI</name>
    <name type="ordered locus">CPS_4760</name>
</gene>
<evidence type="ECO:0000255" key="1">
    <source>
        <dbReference type="HAMAP-Rule" id="MF_01540"/>
    </source>
</evidence>
<sequence length="584" mass="64788">MSNNFTKVENPVLIVEGKQADNERLKAESDYLRGTIKDDLQDRMTGGFTSDNFQLIRTHGMYQQDDRDIRAERQKQKLEPLHNVMLRARLPGGIINPTQWLAIDKFADDYTSYGSIRLTTRQTFQFHGVLKPNIKLMHQTLNSVGLDSIATAGDVNRNVLCTSNPVESALHQEAYEWATKISEHLLPKTRAYAEIWLDEEKVETTEADEIEPILGSNYLPRKFKTTVVIPPNNDIDVHANDLNFVAISEGGELIGFNVLVGGGLAMTHGDKATYPRCADDFGFIPKEHTLAIAAAVVTTQRDWGNRVNRKNAKTKYTLDRVGVDTFKAEVERRAGIKFSESRSYEFTHRGDSFGWVEGIDGKNHLTLFIENGRILDFNGANSDSKALKTGMREIAKIHKGDFRLTANQNLIVAGVSAEDKTIIEQLAREHGLINDGVSNQRKSSMACVAFPTCPLAMAEAERYLPGLVDDVEAILEKNGLKDDSIILRVTGCPNGCGRAMLAEIGLVGKGPGKYNMYLGSDLAGSRVPKLYKENVDEAGVLSEIDALSARWSAERNDGEAFGDFVIRAGIVEQVIVSFRDFHHA</sequence>
<accession>Q47UW8</accession>
<organism>
    <name type="scientific">Colwellia psychrerythraea (strain 34H / ATCC BAA-681)</name>
    <name type="common">Vibrio psychroerythus</name>
    <dbReference type="NCBI Taxonomy" id="167879"/>
    <lineage>
        <taxon>Bacteria</taxon>
        <taxon>Pseudomonadati</taxon>
        <taxon>Pseudomonadota</taxon>
        <taxon>Gammaproteobacteria</taxon>
        <taxon>Alteromonadales</taxon>
        <taxon>Colwelliaceae</taxon>
        <taxon>Colwellia</taxon>
    </lineage>
</organism>
<feature type="chain" id="PRO_0000292960" description="Sulfite reductase [NADPH] hemoprotein beta-component">
    <location>
        <begin position="1"/>
        <end position="584"/>
    </location>
</feature>
<feature type="binding site" evidence="1">
    <location>
        <position position="447"/>
    </location>
    <ligand>
        <name>[4Fe-4S] cluster</name>
        <dbReference type="ChEBI" id="CHEBI:49883"/>
    </ligand>
</feature>
<feature type="binding site" evidence="1">
    <location>
        <position position="453"/>
    </location>
    <ligand>
        <name>[4Fe-4S] cluster</name>
        <dbReference type="ChEBI" id="CHEBI:49883"/>
    </ligand>
</feature>
<feature type="binding site" evidence="1">
    <location>
        <position position="492"/>
    </location>
    <ligand>
        <name>[4Fe-4S] cluster</name>
        <dbReference type="ChEBI" id="CHEBI:49883"/>
    </ligand>
</feature>
<feature type="binding site" evidence="1">
    <location>
        <position position="496"/>
    </location>
    <ligand>
        <name>[4Fe-4S] cluster</name>
        <dbReference type="ChEBI" id="CHEBI:49883"/>
    </ligand>
</feature>
<feature type="binding site" description="axial binding residue" evidence="1">
    <location>
        <position position="496"/>
    </location>
    <ligand>
        <name>siroheme</name>
        <dbReference type="ChEBI" id="CHEBI:60052"/>
    </ligand>
    <ligandPart>
        <name>Fe</name>
        <dbReference type="ChEBI" id="CHEBI:18248"/>
    </ligandPart>
</feature>
<reference key="1">
    <citation type="journal article" date="2005" name="Proc. Natl. Acad. Sci. U.S.A.">
        <title>The psychrophilic lifestyle as revealed by the genome sequence of Colwellia psychrerythraea 34H through genomic and proteomic analyses.</title>
        <authorList>
            <person name="Methe B.A."/>
            <person name="Nelson K.E."/>
            <person name="Deming J.W."/>
            <person name="Momen B."/>
            <person name="Melamud E."/>
            <person name="Zhang X."/>
            <person name="Moult J."/>
            <person name="Madupu R."/>
            <person name="Nelson W.C."/>
            <person name="Dodson R.J."/>
            <person name="Brinkac L.M."/>
            <person name="Daugherty S.C."/>
            <person name="Durkin A.S."/>
            <person name="DeBoy R.T."/>
            <person name="Kolonay J.F."/>
            <person name="Sullivan S.A."/>
            <person name="Zhou L."/>
            <person name="Davidsen T.M."/>
            <person name="Wu M."/>
            <person name="Huston A.L."/>
            <person name="Lewis M."/>
            <person name="Weaver B."/>
            <person name="Weidman J.F."/>
            <person name="Khouri H."/>
            <person name="Utterback T.R."/>
            <person name="Feldblyum T.V."/>
            <person name="Fraser C.M."/>
        </authorList>
    </citation>
    <scope>NUCLEOTIDE SEQUENCE [LARGE SCALE GENOMIC DNA]</scope>
    <source>
        <strain>34H / ATCC BAA-681</strain>
    </source>
</reference>
<comment type="function">
    <text evidence="1">Component of the sulfite reductase complex that catalyzes the 6-electron reduction of sulfite to sulfide. This is one of several activities required for the biosynthesis of L-cysteine from sulfate.</text>
</comment>
<comment type="catalytic activity">
    <reaction evidence="1">
        <text>hydrogen sulfide + 3 NADP(+) + 3 H2O = sulfite + 3 NADPH + 4 H(+)</text>
        <dbReference type="Rhea" id="RHEA:13801"/>
        <dbReference type="ChEBI" id="CHEBI:15377"/>
        <dbReference type="ChEBI" id="CHEBI:15378"/>
        <dbReference type="ChEBI" id="CHEBI:17359"/>
        <dbReference type="ChEBI" id="CHEBI:29919"/>
        <dbReference type="ChEBI" id="CHEBI:57783"/>
        <dbReference type="ChEBI" id="CHEBI:58349"/>
        <dbReference type="EC" id="1.8.1.2"/>
    </reaction>
</comment>
<comment type="cofactor">
    <cofactor evidence="1">
        <name>siroheme</name>
        <dbReference type="ChEBI" id="CHEBI:60052"/>
    </cofactor>
    <text evidence="1">Binds 1 siroheme per subunit.</text>
</comment>
<comment type="cofactor">
    <cofactor evidence="1">
        <name>[4Fe-4S] cluster</name>
        <dbReference type="ChEBI" id="CHEBI:49883"/>
    </cofactor>
    <text evidence="1">Binds 1 [4Fe-4S] cluster per subunit.</text>
</comment>
<comment type="pathway">
    <text evidence="1">Sulfur metabolism; hydrogen sulfide biosynthesis; hydrogen sulfide from sulfite (NADPH route): step 1/1.</text>
</comment>
<comment type="subunit">
    <text evidence="1">Alpha(8)-beta(8). The alpha component is a flavoprotein, the beta component is a hemoprotein.</text>
</comment>
<comment type="similarity">
    <text evidence="1">Belongs to the nitrite and sulfite reductase 4Fe-4S domain family.</text>
</comment>
<proteinExistence type="inferred from homology"/>
<name>CYSI_COLP3</name>
<keyword id="KW-0004">4Fe-4S</keyword>
<keyword id="KW-0028">Amino-acid biosynthesis</keyword>
<keyword id="KW-0198">Cysteine biosynthesis</keyword>
<keyword id="KW-0349">Heme</keyword>
<keyword id="KW-0408">Iron</keyword>
<keyword id="KW-0411">Iron-sulfur</keyword>
<keyword id="KW-0479">Metal-binding</keyword>
<keyword id="KW-0521">NADP</keyword>
<keyword id="KW-0560">Oxidoreductase</keyword>
<dbReference type="EC" id="1.8.1.2" evidence="1"/>
<dbReference type="EMBL" id="CP000083">
    <property type="protein sequence ID" value="AAZ25063.1"/>
    <property type="molecule type" value="Genomic_DNA"/>
</dbReference>
<dbReference type="RefSeq" id="WP_011045485.1">
    <property type="nucleotide sequence ID" value="NC_003910.7"/>
</dbReference>
<dbReference type="SMR" id="Q47UW8"/>
<dbReference type="STRING" id="167879.CPS_4760"/>
<dbReference type="KEGG" id="cps:CPS_4760"/>
<dbReference type="eggNOG" id="COG0155">
    <property type="taxonomic scope" value="Bacteria"/>
</dbReference>
<dbReference type="HOGENOM" id="CLU_001975_3_2_6"/>
<dbReference type="UniPathway" id="UPA00140">
    <property type="reaction ID" value="UER00207"/>
</dbReference>
<dbReference type="Proteomes" id="UP000000547">
    <property type="component" value="Chromosome"/>
</dbReference>
<dbReference type="GO" id="GO:0009337">
    <property type="term" value="C:sulfite reductase complex (NADPH)"/>
    <property type="evidence" value="ECO:0007669"/>
    <property type="project" value="InterPro"/>
</dbReference>
<dbReference type="GO" id="GO:0051539">
    <property type="term" value="F:4 iron, 4 sulfur cluster binding"/>
    <property type="evidence" value="ECO:0007669"/>
    <property type="project" value="UniProtKB-KW"/>
</dbReference>
<dbReference type="GO" id="GO:0020037">
    <property type="term" value="F:heme binding"/>
    <property type="evidence" value="ECO:0007669"/>
    <property type="project" value="InterPro"/>
</dbReference>
<dbReference type="GO" id="GO:0046872">
    <property type="term" value="F:metal ion binding"/>
    <property type="evidence" value="ECO:0007669"/>
    <property type="project" value="UniProtKB-KW"/>
</dbReference>
<dbReference type="GO" id="GO:0050661">
    <property type="term" value="F:NADP binding"/>
    <property type="evidence" value="ECO:0007669"/>
    <property type="project" value="InterPro"/>
</dbReference>
<dbReference type="GO" id="GO:0050311">
    <property type="term" value="F:sulfite reductase (ferredoxin) activity"/>
    <property type="evidence" value="ECO:0007669"/>
    <property type="project" value="TreeGrafter"/>
</dbReference>
<dbReference type="GO" id="GO:0004783">
    <property type="term" value="F:sulfite reductase (NADPH) activity"/>
    <property type="evidence" value="ECO:0007669"/>
    <property type="project" value="UniProtKB-UniRule"/>
</dbReference>
<dbReference type="GO" id="GO:0019344">
    <property type="term" value="P:cysteine biosynthetic process"/>
    <property type="evidence" value="ECO:0007669"/>
    <property type="project" value="UniProtKB-KW"/>
</dbReference>
<dbReference type="GO" id="GO:0070814">
    <property type="term" value="P:hydrogen sulfide biosynthetic process"/>
    <property type="evidence" value="ECO:0007669"/>
    <property type="project" value="UniProtKB-UniRule"/>
</dbReference>
<dbReference type="GO" id="GO:0000103">
    <property type="term" value="P:sulfate assimilation"/>
    <property type="evidence" value="ECO:0007669"/>
    <property type="project" value="UniProtKB-UniRule"/>
</dbReference>
<dbReference type="FunFam" id="3.30.413.10:FF:000003">
    <property type="entry name" value="Sulfite reductase [NADPH] hemoprotein beta-component"/>
    <property type="match status" value="1"/>
</dbReference>
<dbReference type="FunFam" id="3.30.413.10:FF:000004">
    <property type="entry name" value="Sulfite reductase [NADPH] hemoprotein beta-component"/>
    <property type="match status" value="1"/>
</dbReference>
<dbReference type="Gene3D" id="3.30.413.10">
    <property type="entry name" value="Sulfite Reductase Hemoprotein, domain 1"/>
    <property type="match status" value="2"/>
</dbReference>
<dbReference type="HAMAP" id="MF_01540">
    <property type="entry name" value="CysI"/>
    <property type="match status" value="1"/>
</dbReference>
<dbReference type="InterPro" id="IPR011786">
    <property type="entry name" value="CysI"/>
</dbReference>
<dbReference type="InterPro" id="IPR005117">
    <property type="entry name" value="NiRdtase/SiRdtase_haem-b_fer"/>
</dbReference>
<dbReference type="InterPro" id="IPR036136">
    <property type="entry name" value="Nit/Sulf_reduc_fer-like_dom_sf"/>
</dbReference>
<dbReference type="InterPro" id="IPR006067">
    <property type="entry name" value="NO2/SO3_Rdtase_4Fe4S_dom"/>
</dbReference>
<dbReference type="InterPro" id="IPR045169">
    <property type="entry name" value="NO2/SO3_Rdtase_4Fe4S_prot"/>
</dbReference>
<dbReference type="InterPro" id="IPR045854">
    <property type="entry name" value="NO2/SO3_Rdtase_4Fe4S_sf"/>
</dbReference>
<dbReference type="InterPro" id="IPR006066">
    <property type="entry name" value="NO2/SO3_Rdtase_FeS/sirohaem_BS"/>
</dbReference>
<dbReference type="NCBIfam" id="TIGR02041">
    <property type="entry name" value="CysI"/>
    <property type="match status" value="1"/>
</dbReference>
<dbReference type="NCBIfam" id="NF010029">
    <property type="entry name" value="PRK13504.1"/>
    <property type="match status" value="1"/>
</dbReference>
<dbReference type="PANTHER" id="PTHR11493:SF47">
    <property type="entry name" value="SULFITE REDUCTASE [NADPH] SUBUNIT BETA"/>
    <property type="match status" value="1"/>
</dbReference>
<dbReference type="PANTHER" id="PTHR11493">
    <property type="entry name" value="SULFITE REDUCTASE [NADPH] SUBUNIT BETA-RELATED"/>
    <property type="match status" value="1"/>
</dbReference>
<dbReference type="Pfam" id="PF01077">
    <property type="entry name" value="NIR_SIR"/>
    <property type="match status" value="1"/>
</dbReference>
<dbReference type="Pfam" id="PF03460">
    <property type="entry name" value="NIR_SIR_ferr"/>
    <property type="match status" value="2"/>
</dbReference>
<dbReference type="PRINTS" id="PR00397">
    <property type="entry name" value="SIROHAEM"/>
</dbReference>
<dbReference type="SUPFAM" id="SSF56014">
    <property type="entry name" value="Nitrite and sulphite reductase 4Fe-4S domain-like"/>
    <property type="match status" value="2"/>
</dbReference>
<dbReference type="SUPFAM" id="SSF55124">
    <property type="entry name" value="Nitrite/Sulfite reductase N-terminal domain-like"/>
    <property type="match status" value="2"/>
</dbReference>
<dbReference type="PROSITE" id="PS00365">
    <property type="entry name" value="NIR_SIR"/>
    <property type="match status" value="1"/>
</dbReference>